<organism>
    <name type="scientific">Paracoccidioides brasiliensis</name>
    <dbReference type="NCBI Taxonomy" id="121759"/>
    <lineage>
        <taxon>Eukaryota</taxon>
        <taxon>Fungi</taxon>
        <taxon>Dikarya</taxon>
        <taxon>Ascomycota</taxon>
        <taxon>Pezizomycotina</taxon>
        <taxon>Eurotiomycetes</taxon>
        <taxon>Eurotiomycetidae</taxon>
        <taxon>Onygenales</taxon>
        <taxon>Ajellomycetaceae</taxon>
        <taxon>Paracoccidioides</taxon>
    </lineage>
</organism>
<protein>
    <recommendedName>
        <fullName>Ornithine decarboxylase</fullName>
        <shortName>ODC</shortName>
        <ecNumber>4.1.1.17</ecNumber>
    </recommendedName>
</protein>
<proteinExistence type="inferred from homology"/>
<feature type="chain" id="PRO_0000149907" description="Ornithine decarboxylase">
    <location>
        <begin position="1" status="less than"/>
        <end position="79" status="greater than"/>
    </location>
</feature>
<feature type="binding site" evidence="3">
    <location>
        <position position="8"/>
    </location>
    <ligand>
        <name>pyridoxal 5'-phosphate</name>
        <dbReference type="ChEBI" id="CHEBI:597326"/>
    </ligand>
</feature>
<feature type="binding site" evidence="3">
    <location>
        <position position="45"/>
    </location>
    <ligand>
        <name>pyridoxal 5'-phosphate</name>
        <dbReference type="ChEBI" id="CHEBI:597326"/>
    </ligand>
</feature>
<feature type="binding site" evidence="3">
    <location>
        <begin position="75"/>
        <end position="78"/>
    </location>
    <ligand>
        <name>pyridoxal 5'-phosphate</name>
        <dbReference type="ChEBI" id="CHEBI:597326"/>
    </ligand>
</feature>
<feature type="site" description="Stacks against the aromatic ring of pyridoxal phosphate and stabilizes reaction intermediates" evidence="1">
    <location>
        <position position="5"/>
    </location>
</feature>
<feature type="non-terminal residue">
    <location>
        <position position="1"/>
    </location>
</feature>
<feature type="non-terminal residue">
    <location>
        <position position="79"/>
    </location>
</feature>
<comment type="function">
    <text evidence="2">Catalyzes the first and rate-limiting step of polyamine biosynthesis that converts ornithine into putrescine, which is the precursor for the polyamines, spermidine and spermine. Polyamines are essential for cell proliferation and are implicated in cellular processes, ranging from DNA replication to apoptosis.</text>
</comment>
<comment type="catalytic activity">
    <reaction evidence="2">
        <text>L-ornithine + H(+) = putrescine + CO2</text>
        <dbReference type="Rhea" id="RHEA:22964"/>
        <dbReference type="ChEBI" id="CHEBI:15378"/>
        <dbReference type="ChEBI" id="CHEBI:16526"/>
        <dbReference type="ChEBI" id="CHEBI:46911"/>
        <dbReference type="ChEBI" id="CHEBI:326268"/>
        <dbReference type="EC" id="4.1.1.17"/>
    </reaction>
</comment>
<comment type="cofactor">
    <cofactor evidence="2">
        <name>pyridoxal 5'-phosphate</name>
        <dbReference type="ChEBI" id="CHEBI:597326"/>
    </cofactor>
</comment>
<comment type="activity regulation">
    <text evidence="2">Inhibited by antizyme (AZ) OAZ1 in response to polyamine levels. AZ inhibits the assembly of the functional homodimer by binding to ODC monomers and targeting them for ubiquitin-independent proteolytic destruction by the 26S proteasome.</text>
</comment>
<comment type="pathway">
    <text>Amine and polyamine biosynthesis; putrescine biosynthesis via L-ornithine pathway; putrescine from L-ornithine: step 1/1.</text>
</comment>
<comment type="subunit">
    <text evidence="2 3">Homodimer (By similarity). Only the dimer is catalytically active, as the active sites are constructed of residues from both monomers (By similarity).</text>
</comment>
<comment type="subcellular location">
    <subcellularLocation>
        <location evidence="2">Cytoplasm</location>
    </subcellularLocation>
</comment>
<comment type="similarity">
    <text evidence="4">Belongs to the Orn/Lys/Arg decarboxylase class-II family.</text>
</comment>
<dbReference type="EC" id="4.1.1.17"/>
<dbReference type="EMBL" id="X97265">
    <property type="protein sequence ID" value="CAA65920.1"/>
    <property type="molecule type" value="Genomic_DNA"/>
</dbReference>
<dbReference type="SMR" id="Q92445"/>
<dbReference type="VEuPathDB" id="FungiDB:PABG_00600"/>
<dbReference type="VEuPathDB" id="FungiDB:PADG_03032"/>
<dbReference type="UniPathway" id="UPA00535">
    <property type="reaction ID" value="UER00288"/>
</dbReference>
<dbReference type="GO" id="GO:0005737">
    <property type="term" value="C:cytoplasm"/>
    <property type="evidence" value="ECO:0007669"/>
    <property type="project" value="UniProtKB-SubCell"/>
</dbReference>
<dbReference type="GO" id="GO:0004586">
    <property type="term" value="F:ornithine decarboxylase activity"/>
    <property type="evidence" value="ECO:0007669"/>
    <property type="project" value="UniProtKB-EC"/>
</dbReference>
<dbReference type="GO" id="GO:0033387">
    <property type="term" value="P:putrescine biosynthetic process from arginine, via ornithine"/>
    <property type="evidence" value="ECO:0007669"/>
    <property type="project" value="UniProtKB-UniPathway"/>
</dbReference>
<dbReference type="Gene3D" id="3.20.20.10">
    <property type="entry name" value="Alanine racemase"/>
    <property type="match status" value="1"/>
</dbReference>
<dbReference type="InterPro" id="IPR022657">
    <property type="entry name" value="De-COase2_CS"/>
</dbReference>
<dbReference type="InterPro" id="IPR022644">
    <property type="entry name" value="De-COase2_N"/>
</dbReference>
<dbReference type="InterPro" id="IPR002433">
    <property type="entry name" value="Orn_de-COase"/>
</dbReference>
<dbReference type="InterPro" id="IPR029066">
    <property type="entry name" value="PLP-binding_barrel"/>
</dbReference>
<dbReference type="PANTHER" id="PTHR11482">
    <property type="entry name" value="ARGININE/DIAMINOPIMELATE/ORNITHINE DECARBOXYLASE"/>
    <property type="match status" value="1"/>
</dbReference>
<dbReference type="PANTHER" id="PTHR11482:SF6">
    <property type="entry name" value="ORNITHINE DECARBOXYLASE 1-RELATED"/>
    <property type="match status" value="1"/>
</dbReference>
<dbReference type="Pfam" id="PF02784">
    <property type="entry name" value="Orn_Arg_deC_N"/>
    <property type="match status" value="1"/>
</dbReference>
<dbReference type="SUPFAM" id="SSF51419">
    <property type="entry name" value="PLP-binding barrel"/>
    <property type="match status" value="1"/>
</dbReference>
<dbReference type="PROSITE" id="PS00879">
    <property type="entry name" value="ODR_DC_2_2"/>
    <property type="match status" value="1"/>
</dbReference>
<gene>
    <name type="primary">ODC</name>
</gene>
<evidence type="ECO:0000250" key="1">
    <source>
        <dbReference type="UniProtKB" id="P00860"/>
    </source>
</evidence>
<evidence type="ECO:0000250" key="2">
    <source>
        <dbReference type="UniProtKB" id="P08432"/>
    </source>
</evidence>
<evidence type="ECO:0000250" key="3">
    <source>
        <dbReference type="UniProtKB" id="P11926"/>
    </source>
</evidence>
<evidence type="ECO:0000305" key="4"/>
<keyword id="KW-0963">Cytoplasm</keyword>
<keyword id="KW-0210">Decarboxylase</keyword>
<keyword id="KW-0456">Lyase</keyword>
<keyword id="KW-0620">Polyamine biosynthesis</keyword>
<keyword id="KW-0663">Pyridoxal phosphate</keyword>
<accession>Q92445</accession>
<reference key="1">
    <citation type="journal article" date="1996" name="Arch. Microbiol.">
        <title>Ornithine decarboxylase in Paracoccidioides brasiliensis.</title>
        <authorList>
            <person name="San-Blas G."/>
            <person name="Sorais F."/>
            <person name="San-Blas F."/>
            <person name="Ruiz-Herrera J."/>
        </authorList>
    </citation>
    <scope>NUCLEOTIDE SEQUENCE [GENOMIC DNA]</scope>
    <source>
        <strain>ATCC 32071 / IVIC Pb73 / C81</strain>
    </source>
</reference>
<sequence length="79" mass="8579">GVSFHVGSGAEDPKSFVKAVEDSRFVFDQAAEVGFDLKVLDVGGGFSEDTFERFAATLSDALDEYFPPHIRIIAEPGRI</sequence>
<name>DCOR_PARBR</name>